<organism>
    <name type="scientific">Xenopus laevis</name>
    <name type="common">African clawed frog</name>
    <dbReference type="NCBI Taxonomy" id="8355"/>
    <lineage>
        <taxon>Eukaryota</taxon>
        <taxon>Metazoa</taxon>
        <taxon>Chordata</taxon>
        <taxon>Craniata</taxon>
        <taxon>Vertebrata</taxon>
        <taxon>Euteleostomi</taxon>
        <taxon>Amphibia</taxon>
        <taxon>Batrachia</taxon>
        <taxon>Anura</taxon>
        <taxon>Pipoidea</taxon>
        <taxon>Pipidae</taxon>
        <taxon>Xenopodinae</taxon>
        <taxon>Xenopus</taxon>
        <taxon>Xenopus</taxon>
    </lineage>
</organism>
<accession>Q6GN42</accession>
<protein>
    <recommendedName>
        <fullName>Choline transporter-like protein 4</fullName>
    </recommendedName>
    <alternativeName>
        <fullName>Solute carrier family 44 member 4</fullName>
    </alternativeName>
</protein>
<sequence>MASEEYGEPAKHDPSFKGPIKKRGCTDIICCVLFMVFLLGYMVVGILAWLYGDPRQVIYPRNSTGMYCGIGENQGKPNVLYYDLLKCVTGTNILAAAMNGLQCPTTQVCVATCPMDFKWALPNGSPASVYIQEYCQPSINLTTTPLTVAQIAAKELCPVFLVPSTSFFNRCFPGSNLTFPSDFTINGLTANQSRANISEAASQILDSFNFQNVGKKIFEDFAKSWPWIITALVIAMVVSLLFLILLRFTAGILVWVLIVGVIGVIGYGIYHCYMEYDTLNKQGVSVSDVGFTFNLGVYFRVKETWLAILIVLAVVEAILLLVLLFLRKRILIAIALIKEASKAIGHIMSSLFYPLVTFVLLVVCVAYWGMTALYLATSGAPIYRISTVNTSVPGCENITGNETCNPMTFKPSSSCNEARCIFYRYNNEGLFQTNLFNLQIYNVIGFLWCINFVIALGQCVLAGAFASYYWAFHKPKDIPFFPVAESFMRTLRYHTGSLAFGSLILTIVQLIRIILEYVDHKLKGAQNPCTRFLLCCLKCCFWCLEKFIKFLNRNAYIMIAVYGKNFCVSAKNAFKLLMRNIVRVVVLDKVTDLLIFFGKLIVVGGVGVLAFFFFSGRIPIPNDSFKSPTLNYYWIPIITVVLGSYMIAHGFFSVYNMCVDTLFLCFLEDLERNDGSQEKPYYMSKSLMSILNKKNRPPKSEEKKKKK</sequence>
<dbReference type="EMBL" id="BC073678">
    <property type="protein sequence ID" value="AAH73678.1"/>
    <property type="molecule type" value="mRNA"/>
</dbReference>
<dbReference type="RefSeq" id="NP_001086000.1">
    <property type="nucleotide sequence ID" value="NM_001092531.1"/>
</dbReference>
<dbReference type="SMR" id="Q6GN42"/>
<dbReference type="GlyCosmos" id="Q6GN42">
    <property type="glycosylation" value="9 sites, No reported glycans"/>
</dbReference>
<dbReference type="DNASU" id="444429"/>
<dbReference type="GeneID" id="444429"/>
<dbReference type="KEGG" id="xla:444429"/>
<dbReference type="AGR" id="Xenbase:XB-GENE-865528"/>
<dbReference type="CTD" id="444429"/>
<dbReference type="Xenbase" id="XB-GENE-865528">
    <property type="gene designation" value="slc44a4.L"/>
</dbReference>
<dbReference type="OMA" id="FISLMRW"/>
<dbReference type="OrthoDB" id="420519at2759"/>
<dbReference type="Proteomes" id="UP000186698">
    <property type="component" value="Chromosome 8L"/>
</dbReference>
<dbReference type="Bgee" id="444429">
    <property type="expression patterns" value="Expressed in stomach and 14 other cell types or tissues"/>
</dbReference>
<dbReference type="GO" id="GO:0016324">
    <property type="term" value="C:apical plasma membrane"/>
    <property type="evidence" value="ECO:0007669"/>
    <property type="project" value="UniProtKB-SubCell"/>
</dbReference>
<dbReference type="GO" id="GO:0005886">
    <property type="term" value="C:plasma membrane"/>
    <property type="evidence" value="ECO:0000318"/>
    <property type="project" value="GO_Central"/>
</dbReference>
<dbReference type="GO" id="GO:0015297">
    <property type="term" value="F:antiporter activity"/>
    <property type="evidence" value="ECO:0007669"/>
    <property type="project" value="UniProtKB-KW"/>
</dbReference>
<dbReference type="GO" id="GO:0015220">
    <property type="term" value="F:choline transmembrane transporter activity"/>
    <property type="evidence" value="ECO:0000250"/>
    <property type="project" value="UniProtKB"/>
</dbReference>
<dbReference type="GO" id="GO:0090422">
    <property type="term" value="F:thiamine pyrophosphate transmembrane transporter activity"/>
    <property type="evidence" value="ECO:0000318"/>
    <property type="project" value="GO_Central"/>
</dbReference>
<dbReference type="GO" id="GO:0008292">
    <property type="term" value="P:acetylcholine biosynthetic process"/>
    <property type="evidence" value="ECO:0000250"/>
    <property type="project" value="UniProtKB"/>
</dbReference>
<dbReference type="GO" id="GO:0061526">
    <property type="term" value="P:acetylcholine secretion"/>
    <property type="evidence" value="ECO:0000250"/>
    <property type="project" value="UniProtKB"/>
</dbReference>
<dbReference type="GO" id="GO:0015871">
    <property type="term" value="P:choline transport"/>
    <property type="evidence" value="ECO:0000250"/>
    <property type="project" value="UniProtKB"/>
</dbReference>
<dbReference type="GO" id="GO:0035675">
    <property type="term" value="P:neuromast hair cell development"/>
    <property type="evidence" value="ECO:0000250"/>
    <property type="project" value="UniProtKB"/>
</dbReference>
<dbReference type="GO" id="GO:0032475">
    <property type="term" value="P:otolith formation"/>
    <property type="evidence" value="ECO:0000250"/>
    <property type="project" value="UniProtKB"/>
</dbReference>
<dbReference type="GO" id="GO:0030307">
    <property type="term" value="P:positive regulation of cell growth"/>
    <property type="evidence" value="ECO:0000250"/>
    <property type="project" value="UniProtKB"/>
</dbReference>
<dbReference type="GO" id="GO:0030974">
    <property type="term" value="P:thiamine pyrophosphate transmembrane transport"/>
    <property type="evidence" value="ECO:0000318"/>
    <property type="project" value="GO_Central"/>
</dbReference>
<dbReference type="InterPro" id="IPR007603">
    <property type="entry name" value="Choline_transptr-like"/>
</dbReference>
<dbReference type="PANTHER" id="PTHR12385">
    <property type="entry name" value="CHOLINE TRANSPORTER-LIKE (SLC FAMILY 44)"/>
    <property type="match status" value="1"/>
</dbReference>
<dbReference type="PANTHER" id="PTHR12385:SF37">
    <property type="entry name" value="CHOLINE TRANSPORTER-LIKE PROTEIN 4"/>
    <property type="match status" value="1"/>
</dbReference>
<dbReference type="Pfam" id="PF04515">
    <property type="entry name" value="Choline_transpo"/>
    <property type="match status" value="1"/>
</dbReference>
<evidence type="ECO:0000250" key="1">
    <source>
        <dbReference type="UniProtKB" id="Q53GD3"/>
    </source>
</evidence>
<evidence type="ECO:0000250" key="2">
    <source>
        <dbReference type="UniProtKB" id="Q7T2B0"/>
    </source>
</evidence>
<evidence type="ECO:0000250" key="3">
    <source>
        <dbReference type="UniProtKB" id="Q91VA1"/>
    </source>
</evidence>
<evidence type="ECO:0000255" key="4"/>
<evidence type="ECO:0000305" key="5"/>
<comment type="function">
    <text evidence="1 2 3">Choline transporter that seems to play a role in the choline-acetylcholine system and is required to the efferent innervation of hair cells in the olivocochlear bundle for the maintenance of physiological function of outer hair cells and the protection of hair cells from acoustic injury. Also described as a thiamine pyrophosphate transporter (By similarity).</text>
</comment>
<comment type="function">
    <text evidence="1 2 3">Also described as a thiamine pyrophosphate transporter.</text>
</comment>
<comment type="catalytic activity">
    <reaction evidence="1">
        <text>choline(out) + n H(+)(in) = choline(in) + n H(+)(out)</text>
        <dbReference type="Rhea" id="RHEA:75463"/>
        <dbReference type="ChEBI" id="CHEBI:15354"/>
        <dbReference type="ChEBI" id="CHEBI:15378"/>
    </reaction>
</comment>
<comment type="catalytic activity">
    <reaction evidence="1">
        <text>thiamine diphosphate(out) = thiamine diphosphate(in)</text>
        <dbReference type="Rhea" id="RHEA:75471"/>
        <dbReference type="ChEBI" id="CHEBI:58937"/>
    </reaction>
</comment>
<comment type="subcellular location">
    <subcellularLocation>
        <location evidence="1">Membrane</location>
        <topology evidence="1">Multi-pass membrane protein</topology>
    </subcellularLocation>
    <subcellularLocation>
        <location evidence="1">Apical cell membrane</location>
    </subcellularLocation>
</comment>
<comment type="similarity">
    <text evidence="5">Belongs to the CTL (choline transporter-like) family.</text>
</comment>
<feature type="chain" id="PRO_0000359723" description="Choline transporter-like protein 4">
    <location>
        <begin position="1"/>
        <end position="707"/>
    </location>
</feature>
<feature type="topological domain" description="Cytoplasmic" evidence="4">
    <location>
        <begin position="1"/>
        <end position="27"/>
    </location>
</feature>
<feature type="transmembrane region" description="Helical" evidence="4">
    <location>
        <begin position="28"/>
        <end position="48"/>
    </location>
</feature>
<feature type="topological domain" description="Extracellular" evidence="4">
    <location>
        <begin position="49"/>
        <end position="225"/>
    </location>
</feature>
<feature type="transmembrane region" description="Helical" evidence="4">
    <location>
        <begin position="226"/>
        <end position="246"/>
    </location>
</feature>
<feature type="topological domain" description="Cytoplasmic" evidence="4">
    <location>
        <begin position="247"/>
        <end position="249"/>
    </location>
</feature>
<feature type="transmembrane region" description="Helical" evidence="4">
    <location>
        <begin position="250"/>
        <end position="270"/>
    </location>
</feature>
<feature type="topological domain" description="Extracellular" evidence="4">
    <location>
        <begin position="271"/>
        <end position="305"/>
    </location>
</feature>
<feature type="transmembrane region" description="Helical" evidence="4">
    <location>
        <begin position="306"/>
        <end position="326"/>
    </location>
</feature>
<feature type="topological domain" description="Cytoplasmic" evidence="4">
    <location>
        <begin position="327"/>
        <end position="354"/>
    </location>
</feature>
<feature type="transmembrane region" description="Helical" evidence="4">
    <location>
        <begin position="355"/>
        <end position="375"/>
    </location>
</feature>
<feature type="topological domain" description="Extracellular" evidence="4">
    <location>
        <begin position="376"/>
        <end position="442"/>
    </location>
</feature>
<feature type="transmembrane region" description="Helical" evidence="4">
    <location>
        <begin position="443"/>
        <end position="463"/>
    </location>
</feature>
<feature type="topological domain" description="Cytoplasmic" evidence="4">
    <location>
        <begin position="464"/>
        <end position="494"/>
    </location>
</feature>
<feature type="transmembrane region" description="Helical" evidence="4">
    <location>
        <begin position="495"/>
        <end position="515"/>
    </location>
</feature>
<feature type="topological domain" description="Extracellular" evidence="4">
    <location>
        <begin position="516"/>
        <end position="556"/>
    </location>
</feature>
<feature type="transmembrane region" description="Helical" evidence="4">
    <location>
        <begin position="557"/>
        <end position="577"/>
    </location>
</feature>
<feature type="topological domain" description="Cytoplasmic" evidence="4">
    <location>
        <begin position="578"/>
        <end position="593"/>
    </location>
</feature>
<feature type="transmembrane region" description="Helical" evidence="4">
    <location>
        <begin position="594"/>
        <end position="614"/>
    </location>
</feature>
<feature type="topological domain" description="Extracellular" evidence="4">
    <location>
        <begin position="615"/>
        <end position="633"/>
    </location>
</feature>
<feature type="transmembrane region" description="Helical" evidence="4">
    <location>
        <begin position="634"/>
        <end position="654"/>
    </location>
</feature>
<feature type="topological domain" description="Cytoplasmic" evidence="4">
    <location>
        <begin position="655"/>
        <end position="707"/>
    </location>
</feature>
<feature type="glycosylation site" description="N-linked (GlcNAc...) asparagine" evidence="4">
    <location>
        <position position="62"/>
    </location>
</feature>
<feature type="glycosylation site" description="N-linked (GlcNAc...) asparagine" evidence="4">
    <location>
        <position position="140"/>
    </location>
</feature>
<feature type="glycosylation site" description="N-linked (GlcNAc...) asparagine" evidence="4">
    <location>
        <position position="176"/>
    </location>
</feature>
<feature type="glycosylation site" description="N-linked (GlcNAc...) asparagine" evidence="4">
    <location>
        <position position="191"/>
    </location>
</feature>
<feature type="glycosylation site" description="N-linked (GlcNAc...) asparagine" evidence="4">
    <location>
        <position position="196"/>
    </location>
</feature>
<feature type="glycosylation site" description="N-linked (GlcNAc...) asparagine" evidence="4">
    <location>
        <position position="389"/>
    </location>
</feature>
<feature type="glycosylation site" description="N-linked (GlcNAc...) asparagine" evidence="4">
    <location>
        <position position="397"/>
    </location>
</feature>
<feature type="glycosylation site" description="N-linked (GlcNAc...) asparagine" evidence="4">
    <location>
        <position position="401"/>
    </location>
</feature>
<feature type="glycosylation site" description="N-linked (GlcNAc...) asparagine" evidence="4">
    <location>
        <position position="622"/>
    </location>
</feature>
<keyword id="KW-0050">Antiport</keyword>
<keyword id="KW-1003">Cell membrane</keyword>
<keyword id="KW-0325">Glycoprotein</keyword>
<keyword id="KW-0472">Membrane</keyword>
<keyword id="KW-1185">Reference proteome</keyword>
<keyword id="KW-0812">Transmembrane</keyword>
<keyword id="KW-1133">Transmembrane helix</keyword>
<keyword id="KW-0813">Transport</keyword>
<proteinExistence type="evidence at transcript level"/>
<name>CTL4_XENLA</name>
<reference key="1">
    <citation type="submission" date="2004-06" db="EMBL/GenBank/DDBJ databases">
        <authorList>
            <consortium name="NIH - Xenopus Gene Collection (XGC) project"/>
        </authorList>
    </citation>
    <scope>NUCLEOTIDE SEQUENCE [LARGE SCALE MRNA]</scope>
    <source>
        <tissue>Embryo</tissue>
    </source>
</reference>
<gene>
    <name type="primary">slc44a4</name>
    <name type="synonym">ctl4</name>
</gene>